<dbReference type="EC" id="6.1.1.15" evidence="1"/>
<dbReference type="EMBL" id="BA000030">
    <property type="protein sequence ID" value="BAC70357.1"/>
    <property type="molecule type" value="Genomic_DNA"/>
</dbReference>
<dbReference type="SMR" id="Q82JV8"/>
<dbReference type="GeneID" id="41539728"/>
<dbReference type="KEGG" id="sma:SAVERM_2646"/>
<dbReference type="eggNOG" id="COG0442">
    <property type="taxonomic scope" value="Bacteria"/>
</dbReference>
<dbReference type="HOGENOM" id="CLU_001882_4_2_11"/>
<dbReference type="OrthoDB" id="9809052at2"/>
<dbReference type="Proteomes" id="UP000000428">
    <property type="component" value="Chromosome"/>
</dbReference>
<dbReference type="GO" id="GO:0017101">
    <property type="term" value="C:aminoacyl-tRNA synthetase multienzyme complex"/>
    <property type="evidence" value="ECO:0007669"/>
    <property type="project" value="TreeGrafter"/>
</dbReference>
<dbReference type="GO" id="GO:0005737">
    <property type="term" value="C:cytoplasm"/>
    <property type="evidence" value="ECO:0007669"/>
    <property type="project" value="UniProtKB-SubCell"/>
</dbReference>
<dbReference type="GO" id="GO:0005524">
    <property type="term" value="F:ATP binding"/>
    <property type="evidence" value="ECO:0007669"/>
    <property type="project" value="UniProtKB-UniRule"/>
</dbReference>
<dbReference type="GO" id="GO:0004827">
    <property type="term" value="F:proline-tRNA ligase activity"/>
    <property type="evidence" value="ECO:0007669"/>
    <property type="project" value="UniProtKB-UniRule"/>
</dbReference>
<dbReference type="GO" id="GO:0006433">
    <property type="term" value="P:prolyl-tRNA aminoacylation"/>
    <property type="evidence" value="ECO:0007669"/>
    <property type="project" value="UniProtKB-UniRule"/>
</dbReference>
<dbReference type="CDD" id="cd00778">
    <property type="entry name" value="ProRS_core_arch_euk"/>
    <property type="match status" value="1"/>
</dbReference>
<dbReference type="FunFam" id="3.30.930.10:FF:000037">
    <property type="entry name" value="Proline--tRNA ligase"/>
    <property type="match status" value="1"/>
</dbReference>
<dbReference type="Gene3D" id="3.40.50.800">
    <property type="entry name" value="Anticodon-binding domain"/>
    <property type="match status" value="1"/>
</dbReference>
<dbReference type="Gene3D" id="3.30.930.10">
    <property type="entry name" value="Bira Bifunctional Protein, Domain 2"/>
    <property type="match status" value="1"/>
</dbReference>
<dbReference type="HAMAP" id="MF_01571">
    <property type="entry name" value="Pro_tRNA_synth_type3"/>
    <property type="match status" value="1"/>
</dbReference>
<dbReference type="InterPro" id="IPR002314">
    <property type="entry name" value="aa-tRNA-synt_IIb"/>
</dbReference>
<dbReference type="InterPro" id="IPR006195">
    <property type="entry name" value="aa-tRNA-synth_II"/>
</dbReference>
<dbReference type="InterPro" id="IPR045864">
    <property type="entry name" value="aa-tRNA-synth_II/BPL/LPL"/>
</dbReference>
<dbReference type="InterPro" id="IPR004154">
    <property type="entry name" value="Anticodon-bd"/>
</dbReference>
<dbReference type="InterPro" id="IPR036621">
    <property type="entry name" value="Anticodon-bd_dom_sf"/>
</dbReference>
<dbReference type="InterPro" id="IPR002316">
    <property type="entry name" value="Pro-tRNA-ligase_IIa"/>
</dbReference>
<dbReference type="InterPro" id="IPR004499">
    <property type="entry name" value="Pro-tRNA-ligase_IIa_arc-type"/>
</dbReference>
<dbReference type="InterPro" id="IPR016061">
    <property type="entry name" value="Pro-tRNA_ligase_II_C"/>
</dbReference>
<dbReference type="InterPro" id="IPR033721">
    <property type="entry name" value="ProRS_core_arch_euk"/>
</dbReference>
<dbReference type="NCBIfam" id="TIGR00408">
    <property type="entry name" value="proS_fam_I"/>
    <property type="match status" value="1"/>
</dbReference>
<dbReference type="PANTHER" id="PTHR43382:SF3">
    <property type="entry name" value="PROLINE--TRNA LIGASE, CHLOROPLASTIC_MITOCHONDRIAL"/>
    <property type="match status" value="1"/>
</dbReference>
<dbReference type="PANTHER" id="PTHR43382">
    <property type="entry name" value="PROLYL-TRNA SYNTHETASE"/>
    <property type="match status" value="1"/>
</dbReference>
<dbReference type="Pfam" id="PF03129">
    <property type="entry name" value="HGTP_anticodon"/>
    <property type="match status" value="1"/>
</dbReference>
<dbReference type="Pfam" id="PF00587">
    <property type="entry name" value="tRNA-synt_2b"/>
    <property type="match status" value="1"/>
</dbReference>
<dbReference type="PRINTS" id="PR01046">
    <property type="entry name" value="TRNASYNTHPRO"/>
</dbReference>
<dbReference type="SMART" id="SM00946">
    <property type="entry name" value="ProRS-C_1"/>
    <property type="match status" value="1"/>
</dbReference>
<dbReference type="SUPFAM" id="SSF52954">
    <property type="entry name" value="Class II aaRS ABD-related"/>
    <property type="match status" value="1"/>
</dbReference>
<dbReference type="SUPFAM" id="SSF55681">
    <property type="entry name" value="Class II aaRS and biotin synthetases"/>
    <property type="match status" value="1"/>
</dbReference>
<dbReference type="PROSITE" id="PS50862">
    <property type="entry name" value="AA_TRNA_LIGASE_II"/>
    <property type="match status" value="1"/>
</dbReference>
<protein>
    <recommendedName>
        <fullName evidence="1">Proline--tRNA ligase 2</fullName>
        <ecNumber evidence="1">6.1.1.15</ecNumber>
    </recommendedName>
    <alternativeName>
        <fullName evidence="1">Prolyl-tRNA synthetase 2</fullName>
        <shortName evidence="1">ProRS 2</shortName>
    </alternativeName>
</protein>
<sequence>MAKAPVLTPRADDFPRWYQDLINKAELADNGPVRGTMVIRPYGYGLWERMQQEMDARIKETGTQNAYFPLLIPQSYLTKEADHVEGFAPELAVVTHGGGKELEEPAVVRPTSEMIINDYFSKWVQSYRDLPLLINQWANVVRWELRPRLFLRTTEFLWQEGHTAHATYEEARDFAAHIHRHVYADFMENVLAMDVVLGRKTAKERFAGAVNTLTLEGMMGDGKALQMGTSHELGQNFARAFHTQYLSKEGKQELVWQTSWGSTTRMIGALVMMHGDDNGLRVPPRLAQTQVVVLAIKGDEAVLAKVRETGDRLKAAGLRVQVDDRTDVPFGRRAVDWELKGVPVRVEVGPRDLENGTAMVARRIPGGKEPVALDALAALLPTALEEDQALLLRQARERRASRTSDVSTIEEAVEAAAGGGWARIPWATLGERGEAELAEHAASVRCLVAEDGSVPGADDAPGNVAVVARAY</sequence>
<organism>
    <name type="scientific">Streptomyces avermitilis (strain ATCC 31267 / DSM 46492 / JCM 5070 / NBRC 14893 / NCIMB 12804 / NRRL 8165 / MA-4680)</name>
    <dbReference type="NCBI Taxonomy" id="227882"/>
    <lineage>
        <taxon>Bacteria</taxon>
        <taxon>Bacillati</taxon>
        <taxon>Actinomycetota</taxon>
        <taxon>Actinomycetes</taxon>
        <taxon>Kitasatosporales</taxon>
        <taxon>Streptomycetaceae</taxon>
        <taxon>Streptomyces</taxon>
    </lineage>
</organism>
<keyword id="KW-0030">Aminoacyl-tRNA synthetase</keyword>
<keyword id="KW-0067">ATP-binding</keyword>
<keyword id="KW-0963">Cytoplasm</keyword>
<keyword id="KW-0436">Ligase</keyword>
<keyword id="KW-0547">Nucleotide-binding</keyword>
<keyword id="KW-0648">Protein biosynthesis</keyword>
<keyword id="KW-1185">Reference proteome</keyword>
<comment type="function">
    <text evidence="1">Catalyzes the attachment of proline to tRNA(Pro) in a two-step reaction: proline is first activated by ATP to form Pro-AMP and then transferred to the acceptor end of tRNA(Pro).</text>
</comment>
<comment type="catalytic activity">
    <reaction evidence="1">
        <text>tRNA(Pro) + L-proline + ATP = L-prolyl-tRNA(Pro) + AMP + diphosphate</text>
        <dbReference type="Rhea" id="RHEA:14305"/>
        <dbReference type="Rhea" id="RHEA-COMP:9700"/>
        <dbReference type="Rhea" id="RHEA-COMP:9702"/>
        <dbReference type="ChEBI" id="CHEBI:30616"/>
        <dbReference type="ChEBI" id="CHEBI:33019"/>
        <dbReference type="ChEBI" id="CHEBI:60039"/>
        <dbReference type="ChEBI" id="CHEBI:78442"/>
        <dbReference type="ChEBI" id="CHEBI:78532"/>
        <dbReference type="ChEBI" id="CHEBI:456215"/>
        <dbReference type="EC" id="6.1.1.15"/>
    </reaction>
</comment>
<comment type="subunit">
    <text evidence="1">Homodimer.</text>
</comment>
<comment type="subcellular location">
    <subcellularLocation>
        <location evidence="1">Cytoplasm</location>
    </subcellularLocation>
</comment>
<comment type="domain">
    <text evidence="1">Consists of three domains: the N-terminal catalytic domain, the anticodon-binding domain and the C-terminal extension.</text>
</comment>
<comment type="similarity">
    <text evidence="1">Belongs to the class-II aminoacyl-tRNA synthetase family. ProS type 3 subfamily.</text>
</comment>
<gene>
    <name evidence="1" type="primary">proS2</name>
    <name type="ordered locus">SAV_2646</name>
</gene>
<evidence type="ECO:0000255" key="1">
    <source>
        <dbReference type="HAMAP-Rule" id="MF_01571"/>
    </source>
</evidence>
<reference key="1">
    <citation type="journal article" date="2001" name="Proc. Natl. Acad. Sci. U.S.A.">
        <title>Genome sequence of an industrial microorganism Streptomyces avermitilis: deducing the ability of producing secondary metabolites.</title>
        <authorList>
            <person name="Omura S."/>
            <person name="Ikeda H."/>
            <person name="Ishikawa J."/>
            <person name="Hanamoto A."/>
            <person name="Takahashi C."/>
            <person name="Shinose M."/>
            <person name="Takahashi Y."/>
            <person name="Horikawa H."/>
            <person name="Nakazawa H."/>
            <person name="Osonoe T."/>
            <person name="Kikuchi H."/>
            <person name="Shiba T."/>
            <person name="Sakaki Y."/>
            <person name="Hattori M."/>
        </authorList>
    </citation>
    <scope>NUCLEOTIDE SEQUENCE [LARGE SCALE GENOMIC DNA]</scope>
    <source>
        <strain>ATCC 31267 / DSM 46492 / JCM 5070 / NBRC 14893 / NCIMB 12804 / NRRL 8165 / MA-4680</strain>
    </source>
</reference>
<reference key="2">
    <citation type="journal article" date="2003" name="Nat. Biotechnol.">
        <title>Complete genome sequence and comparative analysis of the industrial microorganism Streptomyces avermitilis.</title>
        <authorList>
            <person name="Ikeda H."/>
            <person name="Ishikawa J."/>
            <person name="Hanamoto A."/>
            <person name="Shinose M."/>
            <person name="Kikuchi H."/>
            <person name="Shiba T."/>
            <person name="Sakaki Y."/>
            <person name="Hattori M."/>
            <person name="Omura S."/>
        </authorList>
    </citation>
    <scope>NUCLEOTIDE SEQUENCE [LARGE SCALE GENOMIC DNA]</scope>
    <source>
        <strain>ATCC 31267 / DSM 46492 / JCM 5070 / NBRC 14893 / NCIMB 12804 / NRRL 8165 / MA-4680</strain>
    </source>
</reference>
<feature type="chain" id="PRO_0000249151" description="Proline--tRNA ligase 2">
    <location>
        <begin position="1"/>
        <end position="471"/>
    </location>
</feature>
<proteinExistence type="inferred from homology"/>
<name>SYP2_STRAW</name>
<accession>Q82JV8</accession>